<keyword id="KW-0472">Membrane</keyword>
<keyword id="KW-1185">Reference proteome</keyword>
<keyword id="KW-0732">Signal</keyword>
<keyword id="KW-0812">Transmembrane</keyword>
<keyword id="KW-1133">Transmembrane helix</keyword>
<sequence>MKKFAFLTALFAACYLPNAYAHALYVFAQYDGQTLSGKSYYSDMTPAAETYLEVFRSGVSDPVLTGKTDRQGVFKLSIADVPHTTLKVVVEGDEGHRASVVAAHTSAENQSGADLMLLREDIAHLKDKIYLHDILGGIGYIVGIAGLIALRNARKIKQGRI</sequence>
<evidence type="ECO:0000255" key="1"/>
<evidence type="ECO:0000305" key="2"/>
<reference key="1">
    <citation type="journal article" date="1995" name="Science">
        <title>Whole-genome random sequencing and assembly of Haemophilus influenzae Rd.</title>
        <authorList>
            <person name="Fleischmann R.D."/>
            <person name="Adams M.D."/>
            <person name="White O."/>
            <person name="Clayton R.A."/>
            <person name="Kirkness E.F."/>
            <person name="Kerlavage A.R."/>
            <person name="Bult C.J."/>
            <person name="Tomb J.-F."/>
            <person name="Dougherty B.A."/>
            <person name="Merrick J.M."/>
            <person name="McKenney K."/>
            <person name="Sutton G.G."/>
            <person name="FitzHugh W."/>
            <person name="Fields C.A."/>
            <person name="Gocayne J.D."/>
            <person name="Scott J.D."/>
            <person name="Shirley R."/>
            <person name="Liu L.-I."/>
            <person name="Glodek A."/>
            <person name="Kelley J.M."/>
            <person name="Weidman J.F."/>
            <person name="Phillips C.A."/>
            <person name="Spriggs T."/>
            <person name="Hedblom E."/>
            <person name="Cotton M.D."/>
            <person name="Utterback T.R."/>
            <person name="Hanna M.C."/>
            <person name="Nguyen D.T."/>
            <person name="Saudek D.M."/>
            <person name="Brandon R.C."/>
            <person name="Fine L.D."/>
            <person name="Fritchman J.L."/>
            <person name="Fuhrmann J.L."/>
            <person name="Geoghagen N.S.M."/>
            <person name="Gnehm C.L."/>
            <person name="McDonald L.A."/>
            <person name="Small K.V."/>
            <person name="Fraser C.M."/>
            <person name="Smith H.O."/>
            <person name="Venter J.C."/>
        </authorList>
    </citation>
    <scope>NUCLEOTIDE SEQUENCE [LARGE SCALE GENOMIC DNA]</scope>
    <source>
        <strain>ATCC 51907 / DSM 11121 / KW20 / Rd</strain>
    </source>
</reference>
<dbReference type="EMBL" id="L42023">
    <property type="protein sequence ID" value="AAC23271.1"/>
    <property type="molecule type" value="Genomic_DNA"/>
</dbReference>
<dbReference type="PIR" id="F64038">
    <property type="entry name" value="F64038"/>
</dbReference>
<dbReference type="RefSeq" id="NP_439764.1">
    <property type="nucleotide sequence ID" value="NC_000907.1"/>
</dbReference>
<dbReference type="SMR" id="P44275"/>
<dbReference type="STRING" id="71421.HI_1622"/>
<dbReference type="EnsemblBacteria" id="AAC23271">
    <property type="protein sequence ID" value="AAC23271"/>
    <property type="gene ID" value="HI_1622"/>
</dbReference>
<dbReference type="KEGG" id="hin:HI_1622"/>
<dbReference type="PATRIC" id="fig|71421.8.peg.1697"/>
<dbReference type="eggNOG" id="COG0310">
    <property type="taxonomic scope" value="Bacteria"/>
</dbReference>
<dbReference type="HOGENOM" id="CLU_083845_1_0_6"/>
<dbReference type="OrthoDB" id="8447011at2"/>
<dbReference type="BioCyc" id="HINF71421:G1GJ1-1635-MONOMER"/>
<dbReference type="Proteomes" id="UP000000579">
    <property type="component" value="Chromosome"/>
</dbReference>
<dbReference type="GO" id="GO:0016020">
    <property type="term" value="C:membrane"/>
    <property type="evidence" value="ECO:0007669"/>
    <property type="project" value="UniProtKB-SubCell"/>
</dbReference>
<protein>
    <recommendedName>
        <fullName>Uncharacterized protein HI_1622</fullName>
    </recommendedName>
</protein>
<gene>
    <name type="ordered locus">HI_1622</name>
</gene>
<organism>
    <name type="scientific">Haemophilus influenzae (strain ATCC 51907 / DSM 11121 / KW20 / Rd)</name>
    <dbReference type="NCBI Taxonomy" id="71421"/>
    <lineage>
        <taxon>Bacteria</taxon>
        <taxon>Pseudomonadati</taxon>
        <taxon>Pseudomonadota</taxon>
        <taxon>Gammaproteobacteria</taxon>
        <taxon>Pasteurellales</taxon>
        <taxon>Pasteurellaceae</taxon>
        <taxon>Haemophilus</taxon>
    </lineage>
</organism>
<accession>P44275</accession>
<comment type="subcellular location">
    <subcellularLocation>
        <location evidence="2">Membrane</location>
        <topology evidence="2">Single-pass membrane protein</topology>
    </subcellularLocation>
</comment>
<name>Y1622_HAEIN</name>
<feature type="signal peptide" description="Or 21" evidence="1">
    <location>
        <begin position="1"/>
        <end position="23"/>
    </location>
</feature>
<feature type="chain" id="PRO_0000013975" description="Uncharacterized protein HI_1622">
    <location>
        <begin position="24"/>
        <end position="161"/>
    </location>
</feature>
<feature type="transmembrane region" description="Helical" evidence="1">
    <location>
        <begin position="129"/>
        <end position="149"/>
    </location>
</feature>
<proteinExistence type="inferred from homology"/>